<gene>
    <name evidence="1" type="primary">rpl22</name>
    <name type="ordered locus">VNG_1695G</name>
</gene>
<comment type="function">
    <text evidence="1">This protein binds specifically to 23S rRNA. It makes multiple contacts with different domains of the 23S rRNA in the assembled 50S subunit and ribosome.</text>
</comment>
<comment type="function">
    <text evidence="1">The globular domain of the protein is located near the polypeptide exit tunnel on the outside of the subunit, while an extended beta-hairpin is found that lines the wall of the exit tunnel in the center of the 70S ribosome.</text>
</comment>
<comment type="subunit">
    <text>Part of the 50S ribosomal subunit.</text>
</comment>
<comment type="similarity">
    <text evidence="1">Belongs to the universal ribosomal protein uL22 family.</text>
</comment>
<evidence type="ECO:0000255" key="1">
    <source>
        <dbReference type="HAMAP-Rule" id="MF_01331"/>
    </source>
</evidence>
<evidence type="ECO:0000269" key="2">
    <source>
    </source>
</evidence>
<evidence type="ECO:0000305" key="3"/>
<feature type="initiator methionine" description="Removed" evidence="2">
    <location>
        <position position="1"/>
    </location>
</feature>
<feature type="chain" id="PRO_0000125273" description="Large ribosomal subunit protein uL22">
    <location>
        <begin position="2"/>
        <end position="156"/>
    </location>
</feature>
<feature type="sequence conflict" description="In Ref. 4; AA sequence." evidence="3" ref="4">
    <original>S</original>
    <variation>F</variation>
    <location>
        <position position="4"/>
    </location>
</feature>
<feature type="sequence conflict" description="In Ref. 4; AA sequence." evidence="3" ref="4">
    <original>ASA</original>
    <variation>MSR</variation>
    <location>
        <begin position="13"/>
        <end position="15"/>
    </location>
</feature>
<feature type="sequence conflict" description="In Ref. 4; AA sequence." evidence="3" ref="4">
    <original>S</original>
    <variation>G</variation>
    <location>
        <position position="23"/>
    </location>
</feature>
<accession>P15008</accession>
<accession>P05973</accession>
<accession>Q9HPC9</accession>
<proteinExistence type="evidence at protein level"/>
<dbReference type="EMBL" id="X14967">
    <property type="protein sequence ID" value="CAA33092.1"/>
    <property type="molecule type" value="Genomic_DNA"/>
</dbReference>
<dbReference type="EMBL" id="AB006961">
    <property type="protein sequence ID" value="BAA22275.1"/>
    <property type="molecule type" value="Genomic_DNA"/>
</dbReference>
<dbReference type="EMBL" id="AE004437">
    <property type="protein sequence ID" value="AAG19941.1"/>
    <property type="molecule type" value="Genomic_DNA"/>
</dbReference>
<dbReference type="PIR" id="A84322">
    <property type="entry name" value="A84322"/>
</dbReference>
<dbReference type="PIR" id="S03883">
    <property type="entry name" value="R5HSH2"/>
</dbReference>
<dbReference type="RefSeq" id="WP_010903239.1">
    <property type="nucleotide sequence ID" value="NC_002607.1"/>
</dbReference>
<dbReference type="SMR" id="P15008"/>
<dbReference type="FunCoup" id="P15008">
    <property type="interactions" value="156"/>
</dbReference>
<dbReference type="STRING" id="64091.VNG_1695G"/>
<dbReference type="PaxDb" id="64091-VNG_1695G"/>
<dbReference type="KEGG" id="hal:VNG_1695G"/>
<dbReference type="PATRIC" id="fig|64091.14.peg.1293"/>
<dbReference type="HOGENOM" id="CLU_083987_0_2_2"/>
<dbReference type="InParanoid" id="P15008"/>
<dbReference type="OrthoDB" id="314984at2157"/>
<dbReference type="PhylomeDB" id="P15008"/>
<dbReference type="Proteomes" id="UP000000554">
    <property type="component" value="Chromosome"/>
</dbReference>
<dbReference type="GO" id="GO:0022625">
    <property type="term" value="C:cytosolic large ribosomal subunit"/>
    <property type="evidence" value="ECO:0000318"/>
    <property type="project" value="GO_Central"/>
</dbReference>
<dbReference type="GO" id="GO:0019843">
    <property type="term" value="F:rRNA binding"/>
    <property type="evidence" value="ECO:0007669"/>
    <property type="project" value="UniProtKB-UniRule"/>
</dbReference>
<dbReference type="GO" id="GO:0003735">
    <property type="term" value="F:structural constituent of ribosome"/>
    <property type="evidence" value="ECO:0000318"/>
    <property type="project" value="GO_Central"/>
</dbReference>
<dbReference type="GO" id="GO:0002181">
    <property type="term" value="P:cytoplasmic translation"/>
    <property type="evidence" value="ECO:0000318"/>
    <property type="project" value="GO_Central"/>
</dbReference>
<dbReference type="CDD" id="cd00336">
    <property type="entry name" value="Ribosomal_L22"/>
    <property type="match status" value="1"/>
</dbReference>
<dbReference type="FunFam" id="3.90.470.10:FF:000015">
    <property type="entry name" value="50S ribosomal protein L22"/>
    <property type="match status" value="1"/>
</dbReference>
<dbReference type="Gene3D" id="3.90.470.10">
    <property type="entry name" value="Ribosomal protein L22/L17"/>
    <property type="match status" value="1"/>
</dbReference>
<dbReference type="HAMAP" id="MF_01331_A">
    <property type="entry name" value="Ribosomal_uL22_A"/>
    <property type="match status" value="1"/>
</dbReference>
<dbReference type="InterPro" id="IPR001063">
    <property type="entry name" value="Ribosomal_uL22"/>
</dbReference>
<dbReference type="InterPro" id="IPR018260">
    <property type="entry name" value="Ribosomal_uL22_CS"/>
</dbReference>
<dbReference type="InterPro" id="IPR005721">
    <property type="entry name" value="Ribosomal_uL22_euk/arc"/>
</dbReference>
<dbReference type="InterPro" id="IPR036394">
    <property type="entry name" value="Ribosomal_uL22_sf"/>
</dbReference>
<dbReference type="NCBIfam" id="NF003260">
    <property type="entry name" value="PRK04223.1"/>
    <property type="match status" value="1"/>
</dbReference>
<dbReference type="NCBIfam" id="TIGR01038">
    <property type="entry name" value="uL22_arch_euk"/>
    <property type="match status" value="1"/>
</dbReference>
<dbReference type="PANTHER" id="PTHR11593">
    <property type="entry name" value="60S RIBOSOMAL PROTEIN L17"/>
    <property type="match status" value="1"/>
</dbReference>
<dbReference type="PANTHER" id="PTHR11593:SF10">
    <property type="entry name" value="60S RIBOSOMAL PROTEIN L17"/>
    <property type="match status" value="1"/>
</dbReference>
<dbReference type="Pfam" id="PF00237">
    <property type="entry name" value="Ribosomal_L22"/>
    <property type="match status" value="1"/>
</dbReference>
<dbReference type="SUPFAM" id="SSF54843">
    <property type="entry name" value="Ribosomal protein L22"/>
    <property type="match status" value="1"/>
</dbReference>
<dbReference type="PROSITE" id="PS00464">
    <property type="entry name" value="RIBOSOMAL_L22"/>
    <property type="match status" value="1"/>
</dbReference>
<name>RL22_HALSA</name>
<protein>
    <recommendedName>
        <fullName evidence="1">Large ribosomal subunit protein uL22</fullName>
    </recommendedName>
    <alternativeName>
        <fullName evidence="3">50S ribosomal protein L22</fullName>
    </alternativeName>
    <alternativeName>
        <fullName>HHal22</fullName>
    </alternativeName>
    <alternativeName>
        <fullName>HL23</fullName>
    </alternativeName>
</protein>
<keyword id="KW-0903">Direct protein sequencing</keyword>
<keyword id="KW-1185">Reference proteome</keyword>
<keyword id="KW-0687">Ribonucleoprotein</keyword>
<keyword id="KW-0689">Ribosomal protein</keyword>
<keyword id="KW-0694">RNA-binding</keyword>
<keyword id="KW-0699">rRNA-binding</keyword>
<organism>
    <name type="scientific">Halobacterium salinarum (strain ATCC 700922 / JCM 11081 / NRC-1)</name>
    <name type="common">Halobacterium halobium</name>
    <dbReference type="NCBI Taxonomy" id="64091"/>
    <lineage>
        <taxon>Archaea</taxon>
        <taxon>Methanobacteriati</taxon>
        <taxon>Methanobacteriota</taxon>
        <taxon>Stenosarchaea group</taxon>
        <taxon>Halobacteria</taxon>
        <taxon>Halobacteriales</taxon>
        <taxon>Halobacteriaceae</taxon>
        <taxon>Halobacterium</taxon>
        <taxon>Halobacterium salinarum NRC-34001</taxon>
    </lineage>
</organism>
<reference key="1">
    <citation type="journal article" date="1989" name="FEBS Lett.">
        <title>The nucleotide sequence of the genes coding for the S19 and L22 equivalent ribosomal proteins from Halobacterium halobium.</title>
        <authorList>
            <person name="Mankin A.S."/>
        </authorList>
    </citation>
    <scope>NUCLEOTIDE SEQUENCE [GENOMIC DNA]</scope>
</reference>
<reference key="2">
    <citation type="journal article" date="1996" name="Biochem. Mol. Biol. Int.">
        <title>Organization and nucleotide sequences of ten ribosomal protein genes from the region equivalent to the S10 operon in the archaebacterium, Halobacterium halobium.</title>
        <authorList>
            <person name="Miyokawa T."/>
            <person name="Urayama T."/>
            <person name="Shimooka K."/>
            <person name="Itoh T."/>
        </authorList>
    </citation>
    <scope>NUCLEOTIDE SEQUENCE [GENOMIC DNA]</scope>
</reference>
<reference key="3">
    <citation type="journal article" date="2000" name="Proc. Natl. Acad. Sci. U.S.A.">
        <title>Genome sequence of Halobacterium species NRC-1.</title>
        <authorList>
            <person name="Ng W.V."/>
            <person name="Kennedy S.P."/>
            <person name="Mahairas G.G."/>
            <person name="Berquist B."/>
            <person name="Pan M."/>
            <person name="Shukla H.D."/>
            <person name="Lasky S.R."/>
            <person name="Baliga N.S."/>
            <person name="Thorsson V."/>
            <person name="Sbrogna J."/>
            <person name="Swartzell S."/>
            <person name="Weir D."/>
            <person name="Hall J."/>
            <person name="Dahl T.A."/>
            <person name="Welti R."/>
            <person name="Goo Y.A."/>
            <person name="Leithauser B."/>
            <person name="Keller K."/>
            <person name="Cruz R."/>
            <person name="Danson M.J."/>
            <person name="Hough D.W."/>
            <person name="Maddocks D.G."/>
            <person name="Jablonski P.E."/>
            <person name="Krebs M.P."/>
            <person name="Angevine C.M."/>
            <person name="Dale H."/>
            <person name="Isenbarger T.A."/>
            <person name="Peck R.F."/>
            <person name="Pohlschroder M."/>
            <person name="Spudich J.L."/>
            <person name="Jung K.-H."/>
            <person name="Alam M."/>
            <person name="Freitas T."/>
            <person name="Hou S."/>
            <person name="Daniels C.J."/>
            <person name="Dennis P.P."/>
            <person name="Omer A.D."/>
            <person name="Ebhardt H."/>
            <person name="Lowe T.M."/>
            <person name="Liang P."/>
            <person name="Riley M."/>
            <person name="Hood L."/>
            <person name="DasSarma S."/>
        </authorList>
    </citation>
    <scope>NUCLEOTIDE SEQUENCE [LARGE SCALE GENOMIC DNA]</scope>
    <source>
        <strain>ATCC 700922 / JCM 11081 / NRC-1</strain>
    </source>
</reference>
<reference key="4">
    <citation type="journal article" date="1984" name="Can. J. Biochem. Cell Biol.">
        <title>Purification, properties, and N-terminal amino acid sequence of certain 50S ribosomal subunit proteins from the archaebacterium Halobacterium cutirubrum.</title>
        <authorList>
            <person name="Matheson A.T."/>
            <person name="Yaguchi M."/>
            <person name="Christensen P."/>
            <person name="Rollin C.F."/>
            <person name="Hasnain S."/>
        </authorList>
    </citation>
    <scope>PROTEIN SEQUENCE OF 2-28</scope>
</reference>
<sequence>MGISYSVDVDSEASAKAMLRERSISLKHSKAIAREISGETVADAKEYLQAVIDEERSVPFKQHNSGVGHRNDIDGWDAGRYPEKASKDFLKLLSNVSNNADQQGFDADEMVIEHVAPHKVGESQGRKPRAMGRATTWNATLCDVEIVVTETEEVTA</sequence>